<protein>
    <recommendedName>
        <fullName evidence="1">UPF0181 protein HD_1137</fullName>
    </recommendedName>
</protein>
<evidence type="ECO:0000255" key="1">
    <source>
        <dbReference type="HAMAP-Rule" id="MF_00507"/>
    </source>
</evidence>
<proteinExistence type="inferred from homology"/>
<organism>
    <name type="scientific">Haemophilus ducreyi (strain 35000HP / ATCC 700724)</name>
    <dbReference type="NCBI Taxonomy" id="233412"/>
    <lineage>
        <taxon>Bacteria</taxon>
        <taxon>Pseudomonadati</taxon>
        <taxon>Pseudomonadota</taxon>
        <taxon>Gammaproteobacteria</taxon>
        <taxon>Pasteurellales</taxon>
        <taxon>Pasteurellaceae</taxon>
        <taxon>Haemophilus</taxon>
    </lineage>
</organism>
<gene>
    <name type="ordered locus">HD_1137</name>
</gene>
<reference key="1">
    <citation type="submission" date="2003-06" db="EMBL/GenBank/DDBJ databases">
        <title>The complete genome sequence of Haemophilus ducreyi.</title>
        <authorList>
            <person name="Munson R.S. Jr."/>
            <person name="Ray W.C."/>
            <person name="Mahairas G."/>
            <person name="Sabo P."/>
            <person name="Mungur R."/>
            <person name="Johnson L."/>
            <person name="Nguyen D."/>
            <person name="Wang J."/>
            <person name="Forst C."/>
            <person name="Hood L."/>
        </authorList>
    </citation>
    <scope>NUCLEOTIDE SEQUENCE [LARGE SCALE GENOMIC DNA]</scope>
    <source>
        <strain>35000HP / ATCC 700724</strain>
    </source>
</reference>
<feature type="chain" id="PRO_0000216195" description="UPF0181 protein HD_1137">
    <location>
        <begin position="1"/>
        <end position="52"/>
    </location>
</feature>
<comment type="similarity">
    <text evidence="1">Belongs to the UPF0181 family.</text>
</comment>
<keyword id="KW-1185">Reference proteome</keyword>
<name>Y1137_HAEDU</name>
<sequence length="52" mass="5915">MDKALLSLTHEQQQAAVEQIQQLMKQGISSGEAIQIVANRLRESHQRTNEQK</sequence>
<accession>Q7VM62</accession>
<dbReference type="EMBL" id="AE017143">
    <property type="protein sequence ID" value="AAP95998.1"/>
    <property type="molecule type" value="Genomic_DNA"/>
</dbReference>
<dbReference type="RefSeq" id="WP_010945047.1">
    <property type="nucleotide sequence ID" value="NC_002940.2"/>
</dbReference>
<dbReference type="SMR" id="Q7VM62"/>
<dbReference type="STRING" id="233412.HD_1137"/>
<dbReference type="GeneID" id="60734208"/>
<dbReference type="KEGG" id="hdu:HD_1137"/>
<dbReference type="eggNOG" id="COG3140">
    <property type="taxonomic scope" value="Bacteria"/>
</dbReference>
<dbReference type="HOGENOM" id="CLU_185263_1_1_6"/>
<dbReference type="OrthoDB" id="6522084at2"/>
<dbReference type="Proteomes" id="UP000001022">
    <property type="component" value="Chromosome"/>
</dbReference>
<dbReference type="HAMAP" id="MF_00507">
    <property type="entry name" value="UPF0181"/>
    <property type="match status" value="1"/>
</dbReference>
<dbReference type="InterPro" id="IPR005371">
    <property type="entry name" value="UPF0181"/>
</dbReference>
<dbReference type="NCBIfam" id="NF003476">
    <property type="entry name" value="PRK05114.1"/>
    <property type="match status" value="1"/>
</dbReference>
<dbReference type="Pfam" id="PF03701">
    <property type="entry name" value="UPF0181"/>
    <property type="match status" value="1"/>
</dbReference>